<comment type="function">
    <text evidence="1">Catalyzes the conversion of dihydroorotate to orotate with NAD(+) as electron acceptor.</text>
</comment>
<comment type="catalytic activity">
    <reaction>
        <text>(S)-dihydroorotate + NAD(+) = orotate + NADH + H(+)</text>
        <dbReference type="Rhea" id="RHEA:13513"/>
        <dbReference type="ChEBI" id="CHEBI:15378"/>
        <dbReference type="ChEBI" id="CHEBI:30839"/>
        <dbReference type="ChEBI" id="CHEBI:30864"/>
        <dbReference type="ChEBI" id="CHEBI:57540"/>
        <dbReference type="ChEBI" id="CHEBI:57945"/>
        <dbReference type="EC" id="1.3.1.14"/>
    </reaction>
</comment>
<comment type="cofactor">
    <cofactor evidence="1">
        <name>FMN</name>
        <dbReference type="ChEBI" id="CHEBI:58210"/>
    </cofactor>
    <text evidence="1">Binds 1 FMN per subunit.</text>
</comment>
<comment type="pathway">
    <text>Pyrimidine metabolism; UMP biosynthesis via de novo pathway; orotate from (S)-dihydroorotate (NAD(+) route): step 1/1.</text>
</comment>
<comment type="subunit">
    <text evidence="1">Heterotetramer of 2 PyrK and 2 PyrD type B subunits.</text>
</comment>
<comment type="subcellular location">
    <subcellularLocation>
        <location evidence="1">Cytoplasm</location>
    </subcellularLocation>
</comment>
<comment type="similarity">
    <text evidence="2">Belongs to the dihydroorotate dehydrogenase family. Type 1 subfamily.</text>
</comment>
<evidence type="ECO:0000250" key="1"/>
<evidence type="ECO:0000305" key="2"/>
<proteinExistence type="inferred from homology"/>
<dbReference type="EC" id="1.3.1.14"/>
<dbReference type="EMBL" id="CP000885">
    <property type="protein sequence ID" value="ABX42647.1"/>
    <property type="molecule type" value="Genomic_DNA"/>
</dbReference>
<dbReference type="RefSeq" id="WP_012200301.1">
    <property type="nucleotide sequence ID" value="NC_010001.1"/>
</dbReference>
<dbReference type="SMR" id="A9KKR5"/>
<dbReference type="STRING" id="357809.Cphy_2286"/>
<dbReference type="KEGG" id="cpy:Cphy_2286"/>
<dbReference type="eggNOG" id="COG0167">
    <property type="taxonomic scope" value="Bacteria"/>
</dbReference>
<dbReference type="HOGENOM" id="CLU_042042_0_0_9"/>
<dbReference type="OrthoDB" id="9794954at2"/>
<dbReference type="UniPathway" id="UPA00070">
    <property type="reaction ID" value="UER00945"/>
</dbReference>
<dbReference type="Proteomes" id="UP000000370">
    <property type="component" value="Chromosome"/>
</dbReference>
<dbReference type="GO" id="GO:0005737">
    <property type="term" value="C:cytoplasm"/>
    <property type="evidence" value="ECO:0007669"/>
    <property type="project" value="UniProtKB-SubCell"/>
</dbReference>
<dbReference type="GO" id="GO:0004589">
    <property type="term" value="F:dihydroorotate dehydrogenase (NAD+) activity"/>
    <property type="evidence" value="ECO:0007669"/>
    <property type="project" value="UniProtKB-EC"/>
</dbReference>
<dbReference type="GO" id="GO:0006207">
    <property type="term" value="P:'de novo' pyrimidine nucleobase biosynthetic process"/>
    <property type="evidence" value="ECO:0007669"/>
    <property type="project" value="InterPro"/>
</dbReference>
<dbReference type="GO" id="GO:0044205">
    <property type="term" value="P:'de novo' UMP biosynthetic process"/>
    <property type="evidence" value="ECO:0007669"/>
    <property type="project" value="UniProtKB-UniRule"/>
</dbReference>
<dbReference type="CDD" id="cd04740">
    <property type="entry name" value="DHOD_1B_like"/>
    <property type="match status" value="1"/>
</dbReference>
<dbReference type="FunFam" id="3.20.20.70:FF:000027">
    <property type="entry name" value="Dihydropyrimidine dehydrogenase [NADP(+)]"/>
    <property type="match status" value="1"/>
</dbReference>
<dbReference type="Gene3D" id="3.20.20.70">
    <property type="entry name" value="Aldolase class I"/>
    <property type="match status" value="1"/>
</dbReference>
<dbReference type="HAMAP" id="MF_00224">
    <property type="entry name" value="DHO_dh_type1"/>
    <property type="match status" value="1"/>
</dbReference>
<dbReference type="InterPro" id="IPR013785">
    <property type="entry name" value="Aldolase_TIM"/>
</dbReference>
<dbReference type="InterPro" id="IPR050074">
    <property type="entry name" value="DHO_dehydrogenase"/>
</dbReference>
<dbReference type="InterPro" id="IPR033888">
    <property type="entry name" value="DHOD_1B"/>
</dbReference>
<dbReference type="InterPro" id="IPR024920">
    <property type="entry name" value="Dihydroorotate_DH_1"/>
</dbReference>
<dbReference type="InterPro" id="IPR012135">
    <property type="entry name" value="Dihydroorotate_DH_1_2"/>
</dbReference>
<dbReference type="InterPro" id="IPR005720">
    <property type="entry name" value="Dihydroorotate_DH_cat"/>
</dbReference>
<dbReference type="InterPro" id="IPR001295">
    <property type="entry name" value="Dihydroorotate_DH_CS"/>
</dbReference>
<dbReference type="InterPro" id="IPR049622">
    <property type="entry name" value="Dihydroorotate_DH_I"/>
</dbReference>
<dbReference type="NCBIfam" id="NF005574">
    <property type="entry name" value="PRK07259.1"/>
    <property type="match status" value="1"/>
</dbReference>
<dbReference type="NCBIfam" id="TIGR01037">
    <property type="entry name" value="pyrD_sub1_fam"/>
    <property type="match status" value="1"/>
</dbReference>
<dbReference type="PANTHER" id="PTHR48109:SF1">
    <property type="entry name" value="DIHYDROOROTATE DEHYDROGENASE (FUMARATE)"/>
    <property type="match status" value="1"/>
</dbReference>
<dbReference type="PANTHER" id="PTHR48109">
    <property type="entry name" value="DIHYDROOROTATE DEHYDROGENASE (QUINONE), MITOCHONDRIAL-RELATED"/>
    <property type="match status" value="1"/>
</dbReference>
<dbReference type="Pfam" id="PF01180">
    <property type="entry name" value="DHO_dh"/>
    <property type="match status" value="1"/>
</dbReference>
<dbReference type="PIRSF" id="PIRSF000164">
    <property type="entry name" value="DHO_oxidase"/>
    <property type="match status" value="1"/>
</dbReference>
<dbReference type="SUPFAM" id="SSF51395">
    <property type="entry name" value="FMN-linked oxidoreductases"/>
    <property type="match status" value="1"/>
</dbReference>
<dbReference type="PROSITE" id="PS00912">
    <property type="entry name" value="DHODEHASE_2"/>
    <property type="match status" value="1"/>
</dbReference>
<feature type="chain" id="PRO_1000100220" description="Dihydroorotate dehydrogenase B (NAD(+)), catalytic subunit">
    <location>
        <begin position="1"/>
        <end position="300"/>
    </location>
</feature>
<feature type="active site" description="Nucleophile">
    <location>
        <position position="128"/>
    </location>
</feature>
<feature type="binding site" evidence="1">
    <location>
        <position position="20"/>
    </location>
    <ligand>
        <name>FMN</name>
        <dbReference type="ChEBI" id="CHEBI:58210"/>
    </ligand>
</feature>
<feature type="binding site" evidence="1">
    <location>
        <begin position="44"/>
        <end position="45"/>
    </location>
    <ligand>
        <name>FMN</name>
        <dbReference type="ChEBI" id="CHEBI:58210"/>
    </ligand>
</feature>
<feature type="binding site" evidence="1">
    <location>
        <position position="44"/>
    </location>
    <ligand>
        <name>substrate</name>
    </ligand>
</feature>
<feature type="binding site" evidence="1">
    <location>
        <begin position="68"/>
        <end position="72"/>
    </location>
    <ligand>
        <name>substrate</name>
    </ligand>
</feature>
<feature type="binding site" evidence="1">
    <location>
        <position position="98"/>
    </location>
    <ligand>
        <name>FMN</name>
        <dbReference type="ChEBI" id="CHEBI:58210"/>
    </ligand>
</feature>
<feature type="binding site" evidence="1">
    <location>
        <position position="125"/>
    </location>
    <ligand>
        <name>FMN</name>
        <dbReference type="ChEBI" id="CHEBI:58210"/>
    </ligand>
</feature>
<feature type="binding site" evidence="1">
    <location>
        <position position="125"/>
    </location>
    <ligand>
        <name>substrate</name>
    </ligand>
</feature>
<feature type="binding site" evidence="1">
    <location>
        <position position="163"/>
    </location>
    <ligand>
        <name>FMN</name>
        <dbReference type="ChEBI" id="CHEBI:58210"/>
    </ligand>
</feature>
<feature type="binding site" evidence="1">
    <location>
        <position position="189"/>
    </location>
    <ligand>
        <name>FMN</name>
        <dbReference type="ChEBI" id="CHEBI:58210"/>
    </ligand>
</feature>
<feature type="binding site" evidence="1">
    <location>
        <begin position="190"/>
        <end position="191"/>
    </location>
    <ligand>
        <name>substrate</name>
    </ligand>
</feature>
<feature type="binding site" evidence="1">
    <location>
        <position position="215"/>
    </location>
    <ligand>
        <name>FMN</name>
        <dbReference type="ChEBI" id="CHEBI:58210"/>
    </ligand>
</feature>
<feature type="binding site" evidence="1">
    <location>
        <begin position="241"/>
        <end position="242"/>
    </location>
    <ligand>
        <name>FMN</name>
        <dbReference type="ChEBI" id="CHEBI:58210"/>
    </ligand>
</feature>
<feature type="binding site" evidence="1">
    <location>
        <begin position="263"/>
        <end position="264"/>
    </location>
    <ligand>
        <name>FMN</name>
        <dbReference type="ChEBI" id="CHEBI:58210"/>
    </ligand>
</feature>
<protein>
    <recommendedName>
        <fullName>Dihydroorotate dehydrogenase B (NAD(+)), catalytic subunit</fullName>
        <shortName>DHOD B</shortName>
        <shortName>DHODase B</shortName>
        <shortName>DHOdehase B</shortName>
        <ecNumber>1.3.1.14</ecNumber>
    </recommendedName>
    <alternativeName>
        <fullName>Dihydroorotate oxidase B</fullName>
    </alternativeName>
    <alternativeName>
        <fullName>Orotate reductase (NADH)</fullName>
    </alternativeName>
</protein>
<keyword id="KW-0963">Cytoplasm</keyword>
<keyword id="KW-0285">Flavoprotein</keyword>
<keyword id="KW-0288">FMN</keyword>
<keyword id="KW-0520">NAD</keyword>
<keyword id="KW-0560">Oxidoreductase</keyword>
<keyword id="KW-0665">Pyrimidine biosynthesis</keyword>
<keyword id="KW-1185">Reference proteome</keyword>
<reference key="1">
    <citation type="submission" date="2007-11" db="EMBL/GenBank/DDBJ databases">
        <title>Complete genome sequence of Clostridium phytofermentans ISDg.</title>
        <authorList>
            <person name="Leschine S.B."/>
            <person name="Warnick T.A."/>
            <person name="Blanchard J.L."/>
            <person name="Schnell D.J."/>
            <person name="Petit E.L."/>
            <person name="LaTouf W.G."/>
            <person name="Copeland A."/>
            <person name="Lucas S."/>
            <person name="Lapidus A."/>
            <person name="Barry K."/>
            <person name="Glavina del Rio T."/>
            <person name="Dalin E."/>
            <person name="Tice H."/>
            <person name="Pitluck S."/>
            <person name="Kiss H."/>
            <person name="Brettin T."/>
            <person name="Bruce D."/>
            <person name="Detter J.C."/>
            <person name="Han C."/>
            <person name="Kuske C."/>
            <person name="Schmutz J."/>
            <person name="Larimer F."/>
            <person name="Land M."/>
            <person name="Hauser L."/>
            <person name="Kyrpides N."/>
            <person name="Kim E.A."/>
            <person name="Richardson P."/>
        </authorList>
    </citation>
    <scope>NUCLEOTIDE SEQUENCE [LARGE SCALE GENOMIC DNA]</scope>
    <source>
        <strain>ATCC 700394 / DSM 18823 / ISDg</strain>
    </source>
</reference>
<accession>A9KKR5</accession>
<gene>
    <name type="primary">pyrD</name>
    <name type="ordered locus">Cphy_2286</name>
</gene>
<organism>
    <name type="scientific">Lachnoclostridium phytofermentans (strain ATCC 700394 / DSM 18823 / ISDg)</name>
    <name type="common">Clostridium phytofermentans</name>
    <dbReference type="NCBI Taxonomy" id="357809"/>
    <lineage>
        <taxon>Bacteria</taxon>
        <taxon>Bacillati</taxon>
        <taxon>Bacillota</taxon>
        <taxon>Clostridia</taxon>
        <taxon>Lachnospirales</taxon>
        <taxon>Lachnospiraceae</taxon>
    </lineage>
</organism>
<sequence>MNTNVTIAGVTFKNPVTTASGTFGSGMEYSEFVDLNRLGAITTKGVSSVPWPGNPVPRIAETYGGMLNAIGLQNPGVDMFVERDLAFLKQFDTKVIVNVCGKSVKEYVEVVERLSEEAVDLLELNISCPNVKEGCIAFGQDPKMIAMIMDEIKRHAKQPVIVKLSPNVTDITEMAKAAEAGGADALSLINTLTGMKIDINHRAFAIANKTGGMSGPAVKPIAVRMVYQVANAVKLPIIGMGGIQNAEDALEFIMAGATVVAVGTANFINPYATVEVIEGIEEFMRKNQISDINDLIGCVK</sequence>
<name>PYRDB_LACP7</name>